<name>ATPB_BACCN</name>
<evidence type="ECO:0000255" key="1">
    <source>
        <dbReference type="HAMAP-Rule" id="MF_01347"/>
    </source>
</evidence>
<keyword id="KW-0066">ATP synthesis</keyword>
<keyword id="KW-0067">ATP-binding</keyword>
<keyword id="KW-1003">Cell membrane</keyword>
<keyword id="KW-0139">CF(1)</keyword>
<keyword id="KW-0375">Hydrogen ion transport</keyword>
<keyword id="KW-0406">Ion transport</keyword>
<keyword id="KW-0472">Membrane</keyword>
<keyword id="KW-0547">Nucleotide-binding</keyword>
<keyword id="KW-1278">Translocase</keyword>
<keyword id="KW-0813">Transport</keyword>
<protein>
    <recommendedName>
        <fullName evidence="1">ATP synthase subunit beta</fullName>
        <ecNumber evidence="1">7.1.2.2</ecNumber>
    </recommendedName>
    <alternativeName>
        <fullName evidence="1">ATP synthase F1 sector subunit beta</fullName>
    </alternativeName>
    <alternativeName>
        <fullName evidence="1">F-ATPase subunit beta</fullName>
    </alternativeName>
</protein>
<sequence>MNKGRVTQIMGPVVDVKFDGGKLPEIYNALRIKKDEVNLTLEVALHLGDDTVRTVAMSSTDGLVRGTEVEDTGRPISVPVGDATLGRVFNVLGEAIDLDGEIPADVRRDPIHRQAPAFEELSTKVEILETGIKVVDLLAPYIKGGKIGLFGGAGVGKTVLIQELINNIAQEHGGISVFAGVGERTREGNDLYHEMSDSGVIKKTAMVFGQMNEPPGARQRVALTGLTMAEHFRDEQGQDVLLFIDNIFRFTQAGSEVSALLGRMPSAVGYQPTLATEMGQLQERITSTNKGSITSIQAVYVPADDYTDPAPATTFAHLDATTNLERRLTQMGIYPAVDPLASTSRALSPEIVGEEHYEVARQVQQTLQRYKELQDIIAILGMDELSEEDKLVVHRARRIQFFLSQNFHVAEQFTGQPGSYVPVKETVRGFKEILEGKHDDLPEDAFRLVGGIEEVVENAKKMMA</sequence>
<feature type="chain" id="PRO_1000086905" description="ATP synthase subunit beta">
    <location>
        <begin position="1"/>
        <end position="464"/>
    </location>
</feature>
<feature type="binding site" evidence="1">
    <location>
        <begin position="151"/>
        <end position="158"/>
    </location>
    <ligand>
        <name>ATP</name>
        <dbReference type="ChEBI" id="CHEBI:30616"/>
    </ligand>
</feature>
<comment type="function">
    <text evidence="1">Produces ATP from ADP in the presence of a proton gradient across the membrane. The catalytic sites are hosted primarily by the beta subunits.</text>
</comment>
<comment type="catalytic activity">
    <reaction evidence="1">
        <text>ATP + H2O + 4 H(+)(in) = ADP + phosphate + 5 H(+)(out)</text>
        <dbReference type="Rhea" id="RHEA:57720"/>
        <dbReference type="ChEBI" id="CHEBI:15377"/>
        <dbReference type="ChEBI" id="CHEBI:15378"/>
        <dbReference type="ChEBI" id="CHEBI:30616"/>
        <dbReference type="ChEBI" id="CHEBI:43474"/>
        <dbReference type="ChEBI" id="CHEBI:456216"/>
        <dbReference type="EC" id="7.1.2.2"/>
    </reaction>
</comment>
<comment type="subunit">
    <text evidence="1">F-type ATPases have 2 components, CF(1) - the catalytic core - and CF(0) - the membrane proton channel. CF(1) has five subunits: alpha(3), beta(3), gamma(1), delta(1), epsilon(1). CF(0) has three main subunits: a(1), b(2) and c(9-12). The alpha and beta chains form an alternating ring which encloses part of the gamma chain. CF(1) is attached to CF(0) by a central stalk formed by the gamma and epsilon chains, while a peripheral stalk is formed by the delta and b chains.</text>
</comment>
<comment type="subcellular location">
    <subcellularLocation>
        <location evidence="1">Cell membrane</location>
        <topology evidence="1">Peripheral membrane protein</topology>
    </subcellularLocation>
</comment>
<comment type="similarity">
    <text evidence="1">Belongs to the ATPase alpha/beta chains family.</text>
</comment>
<reference key="1">
    <citation type="journal article" date="2008" name="Chem. Biol. Interact.">
        <title>Extending the Bacillus cereus group genomics to putative food-borne pathogens of different toxicity.</title>
        <authorList>
            <person name="Lapidus A."/>
            <person name="Goltsman E."/>
            <person name="Auger S."/>
            <person name="Galleron N."/>
            <person name="Segurens B."/>
            <person name="Dossat C."/>
            <person name="Land M.L."/>
            <person name="Broussolle V."/>
            <person name="Brillard J."/>
            <person name="Guinebretiere M.-H."/>
            <person name="Sanchis V."/>
            <person name="Nguen-the C."/>
            <person name="Lereclus D."/>
            <person name="Richardson P."/>
            <person name="Wincker P."/>
            <person name="Weissenbach J."/>
            <person name="Ehrlich S.D."/>
            <person name="Sorokin A."/>
        </authorList>
    </citation>
    <scope>NUCLEOTIDE SEQUENCE [LARGE SCALE GENOMIC DNA]</scope>
    <source>
        <strain>DSM 22905 / CIP 110041 / 391-98 / NVH 391-98</strain>
    </source>
</reference>
<accession>A7GV56</accession>
<gene>
    <name evidence="1" type="primary">atpD</name>
    <name type="ordered locus">Bcer98_3825</name>
</gene>
<proteinExistence type="inferred from homology"/>
<dbReference type="EC" id="7.1.2.2" evidence="1"/>
<dbReference type="EMBL" id="CP000764">
    <property type="protein sequence ID" value="ABS24014.1"/>
    <property type="molecule type" value="Genomic_DNA"/>
</dbReference>
<dbReference type="RefSeq" id="WP_012096272.1">
    <property type="nucleotide sequence ID" value="NC_009674.1"/>
</dbReference>
<dbReference type="SMR" id="A7GV56"/>
<dbReference type="STRING" id="315749.Bcer98_3825"/>
<dbReference type="GeneID" id="33899066"/>
<dbReference type="KEGG" id="bcy:Bcer98_3825"/>
<dbReference type="eggNOG" id="COG0055">
    <property type="taxonomic scope" value="Bacteria"/>
</dbReference>
<dbReference type="HOGENOM" id="CLU_022398_0_2_9"/>
<dbReference type="OrthoDB" id="9801639at2"/>
<dbReference type="Proteomes" id="UP000002300">
    <property type="component" value="Chromosome"/>
</dbReference>
<dbReference type="GO" id="GO:0005886">
    <property type="term" value="C:plasma membrane"/>
    <property type="evidence" value="ECO:0007669"/>
    <property type="project" value="UniProtKB-SubCell"/>
</dbReference>
<dbReference type="GO" id="GO:0045259">
    <property type="term" value="C:proton-transporting ATP synthase complex"/>
    <property type="evidence" value="ECO:0007669"/>
    <property type="project" value="UniProtKB-KW"/>
</dbReference>
<dbReference type="GO" id="GO:0005524">
    <property type="term" value="F:ATP binding"/>
    <property type="evidence" value="ECO:0007669"/>
    <property type="project" value="UniProtKB-UniRule"/>
</dbReference>
<dbReference type="GO" id="GO:0016887">
    <property type="term" value="F:ATP hydrolysis activity"/>
    <property type="evidence" value="ECO:0007669"/>
    <property type="project" value="InterPro"/>
</dbReference>
<dbReference type="GO" id="GO:0046933">
    <property type="term" value="F:proton-transporting ATP synthase activity, rotational mechanism"/>
    <property type="evidence" value="ECO:0007669"/>
    <property type="project" value="UniProtKB-UniRule"/>
</dbReference>
<dbReference type="CDD" id="cd18110">
    <property type="entry name" value="ATP-synt_F1_beta_C"/>
    <property type="match status" value="1"/>
</dbReference>
<dbReference type="CDD" id="cd18115">
    <property type="entry name" value="ATP-synt_F1_beta_N"/>
    <property type="match status" value="1"/>
</dbReference>
<dbReference type="CDD" id="cd01133">
    <property type="entry name" value="F1-ATPase_beta_CD"/>
    <property type="match status" value="1"/>
</dbReference>
<dbReference type="FunFam" id="1.10.1140.10:FF:000001">
    <property type="entry name" value="ATP synthase subunit beta"/>
    <property type="match status" value="1"/>
</dbReference>
<dbReference type="FunFam" id="2.40.10.170:FF:000005">
    <property type="entry name" value="ATP synthase subunit beta"/>
    <property type="match status" value="1"/>
</dbReference>
<dbReference type="FunFam" id="3.40.50.300:FF:000004">
    <property type="entry name" value="ATP synthase subunit beta"/>
    <property type="match status" value="1"/>
</dbReference>
<dbReference type="Gene3D" id="2.40.10.170">
    <property type="match status" value="1"/>
</dbReference>
<dbReference type="Gene3D" id="1.10.1140.10">
    <property type="entry name" value="Bovine Mitochondrial F1-atpase, Atp Synthase Beta Chain, Chain D, domain 3"/>
    <property type="match status" value="1"/>
</dbReference>
<dbReference type="Gene3D" id="3.40.50.300">
    <property type="entry name" value="P-loop containing nucleotide triphosphate hydrolases"/>
    <property type="match status" value="1"/>
</dbReference>
<dbReference type="HAMAP" id="MF_01347">
    <property type="entry name" value="ATP_synth_beta_bact"/>
    <property type="match status" value="1"/>
</dbReference>
<dbReference type="InterPro" id="IPR003593">
    <property type="entry name" value="AAA+_ATPase"/>
</dbReference>
<dbReference type="InterPro" id="IPR055190">
    <property type="entry name" value="ATP-synt_VA_C"/>
</dbReference>
<dbReference type="InterPro" id="IPR005722">
    <property type="entry name" value="ATP_synth_F1_bsu"/>
</dbReference>
<dbReference type="InterPro" id="IPR020003">
    <property type="entry name" value="ATPase_a/bsu_AS"/>
</dbReference>
<dbReference type="InterPro" id="IPR050053">
    <property type="entry name" value="ATPase_alpha/beta_chains"/>
</dbReference>
<dbReference type="InterPro" id="IPR004100">
    <property type="entry name" value="ATPase_F1/V1/A1_a/bsu_N"/>
</dbReference>
<dbReference type="InterPro" id="IPR036121">
    <property type="entry name" value="ATPase_F1/V1/A1_a/bsu_N_sf"/>
</dbReference>
<dbReference type="InterPro" id="IPR000194">
    <property type="entry name" value="ATPase_F1/V1/A1_a/bsu_nucl-bd"/>
</dbReference>
<dbReference type="InterPro" id="IPR024034">
    <property type="entry name" value="ATPase_F1/V1_b/a_C"/>
</dbReference>
<dbReference type="InterPro" id="IPR027417">
    <property type="entry name" value="P-loop_NTPase"/>
</dbReference>
<dbReference type="NCBIfam" id="TIGR01039">
    <property type="entry name" value="atpD"/>
    <property type="match status" value="1"/>
</dbReference>
<dbReference type="PANTHER" id="PTHR15184">
    <property type="entry name" value="ATP SYNTHASE"/>
    <property type="match status" value="1"/>
</dbReference>
<dbReference type="PANTHER" id="PTHR15184:SF71">
    <property type="entry name" value="ATP SYNTHASE SUBUNIT BETA, MITOCHONDRIAL"/>
    <property type="match status" value="1"/>
</dbReference>
<dbReference type="Pfam" id="PF00006">
    <property type="entry name" value="ATP-synt_ab"/>
    <property type="match status" value="1"/>
</dbReference>
<dbReference type="Pfam" id="PF02874">
    <property type="entry name" value="ATP-synt_ab_N"/>
    <property type="match status" value="1"/>
</dbReference>
<dbReference type="Pfam" id="PF22919">
    <property type="entry name" value="ATP-synt_VA_C"/>
    <property type="match status" value="1"/>
</dbReference>
<dbReference type="SMART" id="SM00382">
    <property type="entry name" value="AAA"/>
    <property type="match status" value="1"/>
</dbReference>
<dbReference type="SUPFAM" id="SSF47917">
    <property type="entry name" value="C-terminal domain of alpha and beta subunits of F1 ATP synthase"/>
    <property type="match status" value="1"/>
</dbReference>
<dbReference type="SUPFAM" id="SSF50615">
    <property type="entry name" value="N-terminal domain of alpha and beta subunits of F1 ATP synthase"/>
    <property type="match status" value="1"/>
</dbReference>
<dbReference type="SUPFAM" id="SSF52540">
    <property type="entry name" value="P-loop containing nucleoside triphosphate hydrolases"/>
    <property type="match status" value="1"/>
</dbReference>
<dbReference type="PROSITE" id="PS00152">
    <property type="entry name" value="ATPASE_ALPHA_BETA"/>
    <property type="match status" value="1"/>
</dbReference>
<organism>
    <name type="scientific">Bacillus cytotoxicus (strain DSM 22905 / CIP 110041 / 391-98 / NVH 391-98)</name>
    <dbReference type="NCBI Taxonomy" id="315749"/>
    <lineage>
        <taxon>Bacteria</taxon>
        <taxon>Bacillati</taxon>
        <taxon>Bacillota</taxon>
        <taxon>Bacilli</taxon>
        <taxon>Bacillales</taxon>
        <taxon>Bacillaceae</taxon>
        <taxon>Bacillus</taxon>
        <taxon>Bacillus cereus group</taxon>
    </lineage>
</organism>